<sequence length="505" mass="57771">MQDNPSIQFDDQRLAKRQQLIEAGVPMYPHEFRRSHTIAEIRAKYSQAGHDPSSDQVITAGRLYGVRDHGKTFFADLRDETGRIQLYIRKDALPEGKFQMFKSSIERGDIIGVTGRIFKTKVGEISIFVDDIILLTKTLCSLPEKFHGLTNLEKRYRQRYLDLIVNEESRETFRTRSRIISLLRNYLTGQGFLEFETPTLQPLYGGANARPFTTFHNFLGQKLYLRIAPELYLKRLVVGGFEKVFEVAKNFRNEDIDTSHNPEFSMVEIYQAYADYTDMMKLTEGIISSIVHEVTGSYEVAFEENTISYKAPWTVMSMEEAVRTIGKVDIFAHDLESLKKIGKEKGVDGIDDVHTQREMLVLFFEALVEDKLIQPTFITDFPVENSPLAKSHREKEGFVERFELFIAGMELANGFSELNDPLDQMERFEAQEEKRRLGDEEAQMHDYDFVNALGYGMPPTGGVGIGIDRLVMLITGNTSIKEVILFPSMKREVTTPADEEEPSSV</sequence>
<evidence type="ECO:0000255" key="1">
    <source>
        <dbReference type="HAMAP-Rule" id="MF_00252"/>
    </source>
</evidence>
<name>SYK_METHJ</name>
<proteinExistence type="inferred from homology"/>
<reference key="1">
    <citation type="journal article" date="2016" name="Stand. Genomic Sci.">
        <title>Complete genome sequence of Methanospirillum hungatei type strain JF1.</title>
        <authorList>
            <person name="Gunsalus R.P."/>
            <person name="Cook L.E."/>
            <person name="Crable B."/>
            <person name="Rohlin L."/>
            <person name="McDonald E."/>
            <person name="Mouttaki H."/>
            <person name="Sieber J.R."/>
            <person name="Poweleit N."/>
            <person name="Zhou H."/>
            <person name="Lapidus A.L."/>
            <person name="Daligault H.E."/>
            <person name="Land M."/>
            <person name="Gilna P."/>
            <person name="Ivanova N."/>
            <person name="Kyrpides N."/>
            <person name="Culley D.E."/>
            <person name="McInerney M.J."/>
        </authorList>
    </citation>
    <scope>NUCLEOTIDE SEQUENCE [LARGE SCALE GENOMIC DNA]</scope>
    <source>
        <strain>ATCC 27890 / DSM 864 / NBRC 100397 / JF-1</strain>
    </source>
</reference>
<dbReference type="EC" id="6.1.1.6" evidence="1"/>
<dbReference type="EMBL" id="CP000254">
    <property type="protein sequence ID" value="ABD42196.1"/>
    <property type="molecule type" value="Genomic_DNA"/>
</dbReference>
<dbReference type="RefSeq" id="WP_011449454.1">
    <property type="nucleotide sequence ID" value="NC_007796.1"/>
</dbReference>
<dbReference type="SMR" id="Q2FSN8"/>
<dbReference type="STRING" id="323259.Mhun_2496"/>
<dbReference type="EnsemblBacteria" id="ABD42196">
    <property type="protein sequence ID" value="ABD42196"/>
    <property type="gene ID" value="Mhun_2496"/>
</dbReference>
<dbReference type="GeneID" id="3924764"/>
<dbReference type="KEGG" id="mhu:Mhun_2496"/>
<dbReference type="eggNOG" id="arCOG00408">
    <property type="taxonomic scope" value="Archaea"/>
</dbReference>
<dbReference type="HOGENOM" id="CLU_008255_6_0_2"/>
<dbReference type="InParanoid" id="Q2FSN8"/>
<dbReference type="OrthoDB" id="131570at2157"/>
<dbReference type="Proteomes" id="UP000001941">
    <property type="component" value="Chromosome"/>
</dbReference>
<dbReference type="GO" id="GO:0005829">
    <property type="term" value="C:cytosol"/>
    <property type="evidence" value="ECO:0007669"/>
    <property type="project" value="TreeGrafter"/>
</dbReference>
<dbReference type="GO" id="GO:0005524">
    <property type="term" value="F:ATP binding"/>
    <property type="evidence" value="ECO:0007669"/>
    <property type="project" value="UniProtKB-UniRule"/>
</dbReference>
<dbReference type="GO" id="GO:0004824">
    <property type="term" value="F:lysine-tRNA ligase activity"/>
    <property type="evidence" value="ECO:0007669"/>
    <property type="project" value="UniProtKB-UniRule"/>
</dbReference>
<dbReference type="GO" id="GO:0000287">
    <property type="term" value="F:magnesium ion binding"/>
    <property type="evidence" value="ECO:0007669"/>
    <property type="project" value="UniProtKB-UniRule"/>
</dbReference>
<dbReference type="GO" id="GO:0000049">
    <property type="term" value="F:tRNA binding"/>
    <property type="evidence" value="ECO:0007669"/>
    <property type="project" value="TreeGrafter"/>
</dbReference>
<dbReference type="GO" id="GO:0006430">
    <property type="term" value="P:lysyl-tRNA aminoacylation"/>
    <property type="evidence" value="ECO:0007669"/>
    <property type="project" value="UniProtKB-UniRule"/>
</dbReference>
<dbReference type="CDD" id="cd00775">
    <property type="entry name" value="LysRS_core"/>
    <property type="match status" value="1"/>
</dbReference>
<dbReference type="CDD" id="cd04322">
    <property type="entry name" value="LysRS_N"/>
    <property type="match status" value="1"/>
</dbReference>
<dbReference type="Gene3D" id="3.30.930.10">
    <property type="entry name" value="Bira Bifunctional Protein, Domain 2"/>
    <property type="match status" value="1"/>
</dbReference>
<dbReference type="Gene3D" id="2.40.50.140">
    <property type="entry name" value="Nucleic acid-binding proteins"/>
    <property type="match status" value="1"/>
</dbReference>
<dbReference type="HAMAP" id="MF_00252">
    <property type="entry name" value="Lys_tRNA_synth_class2"/>
    <property type="match status" value="1"/>
</dbReference>
<dbReference type="InterPro" id="IPR004364">
    <property type="entry name" value="Aa-tRNA-synt_II"/>
</dbReference>
<dbReference type="InterPro" id="IPR006195">
    <property type="entry name" value="aa-tRNA-synth_II"/>
</dbReference>
<dbReference type="InterPro" id="IPR045864">
    <property type="entry name" value="aa-tRNA-synth_II/BPL/LPL"/>
</dbReference>
<dbReference type="InterPro" id="IPR002313">
    <property type="entry name" value="Lys-tRNA-ligase_II"/>
</dbReference>
<dbReference type="InterPro" id="IPR044136">
    <property type="entry name" value="Lys-tRNA-ligase_II_N"/>
</dbReference>
<dbReference type="InterPro" id="IPR018149">
    <property type="entry name" value="Lys-tRNA-synth_II_C"/>
</dbReference>
<dbReference type="InterPro" id="IPR012340">
    <property type="entry name" value="NA-bd_OB-fold"/>
</dbReference>
<dbReference type="InterPro" id="IPR004365">
    <property type="entry name" value="NA-bd_OB_tRNA"/>
</dbReference>
<dbReference type="NCBIfam" id="TIGR00499">
    <property type="entry name" value="lysS_bact"/>
    <property type="match status" value="1"/>
</dbReference>
<dbReference type="NCBIfam" id="NF001756">
    <property type="entry name" value="PRK00484.1"/>
    <property type="match status" value="1"/>
</dbReference>
<dbReference type="PANTHER" id="PTHR42918:SF15">
    <property type="entry name" value="LYSINE--TRNA LIGASE, CHLOROPLASTIC_MITOCHONDRIAL"/>
    <property type="match status" value="1"/>
</dbReference>
<dbReference type="PANTHER" id="PTHR42918">
    <property type="entry name" value="LYSYL-TRNA SYNTHETASE"/>
    <property type="match status" value="1"/>
</dbReference>
<dbReference type="Pfam" id="PF00152">
    <property type="entry name" value="tRNA-synt_2"/>
    <property type="match status" value="1"/>
</dbReference>
<dbReference type="Pfam" id="PF01336">
    <property type="entry name" value="tRNA_anti-codon"/>
    <property type="match status" value="1"/>
</dbReference>
<dbReference type="PRINTS" id="PR00982">
    <property type="entry name" value="TRNASYNTHLYS"/>
</dbReference>
<dbReference type="SUPFAM" id="SSF55681">
    <property type="entry name" value="Class II aaRS and biotin synthetases"/>
    <property type="match status" value="1"/>
</dbReference>
<dbReference type="SUPFAM" id="SSF50249">
    <property type="entry name" value="Nucleic acid-binding proteins"/>
    <property type="match status" value="1"/>
</dbReference>
<dbReference type="PROSITE" id="PS50862">
    <property type="entry name" value="AA_TRNA_LIGASE_II"/>
    <property type="match status" value="1"/>
</dbReference>
<accession>Q2FSN8</accession>
<keyword id="KW-0030">Aminoacyl-tRNA synthetase</keyword>
<keyword id="KW-0067">ATP-binding</keyword>
<keyword id="KW-0963">Cytoplasm</keyword>
<keyword id="KW-0436">Ligase</keyword>
<keyword id="KW-0460">Magnesium</keyword>
<keyword id="KW-0479">Metal-binding</keyword>
<keyword id="KW-0547">Nucleotide-binding</keyword>
<keyword id="KW-0648">Protein biosynthesis</keyword>
<keyword id="KW-1185">Reference proteome</keyword>
<gene>
    <name evidence="1" type="primary">lysS</name>
    <name type="ordered locus">Mhun_2496</name>
</gene>
<feature type="chain" id="PRO_1000101127" description="Lysine--tRNA ligase">
    <location>
        <begin position="1"/>
        <end position="505"/>
    </location>
</feature>
<feature type="binding site" evidence="1">
    <location>
        <position position="403"/>
    </location>
    <ligand>
        <name>Mg(2+)</name>
        <dbReference type="ChEBI" id="CHEBI:18420"/>
        <label>1</label>
    </ligand>
</feature>
<feature type="binding site" evidence="1">
    <location>
        <position position="410"/>
    </location>
    <ligand>
        <name>Mg(2+)</name>
        <dbReference type="ChEBI" id="CHEBI:18420"/>
        <label>1</label>
    </ligand>
</feature>
<feature type="binding site" evidence="1">
    <location>
        <position position="410"/>
    </location>
    <ligand>
        <name>Mg(2+)</name>
        <dbReference type="ChEBI" id="CHEBI:18420"/>
        <label>2</label>
    </ligand>
</feature>
<organism>
    <name type="scientific">Methanospirillum hungatei JF-1 (strain ATCC 27890 / DSM 864 / NBRC 100397 / JF-1)</name>
    <dbReference type="NCBI Taxonomy" id="323259"/>
    <lineage>
        <taxon>Archaea</taxon>
        <taxon>Methanobacteriati</taxon>
        <taxon>Methanobacteriota</taxon>
        <taxon>Stenosarchaea group</taxon>
        <taxon>Methanomicrobia</taxon>
        <taxon>Methanomicrobiales</taxon>
        <taxon>Methanospirillaceae</taxon>
        <taxon>Methanospirillum</taxon>
    </lineage>
</organism>
<protein>
    <recommendedName>
        <fullName evidence="1">Lysine--tRNA ligase</fullName>
        <ecNumber evidence="1">6.1.1.6</ecNumber>
    </recommendedName>
    <alternativeName>
        <fullName evidence="1">Lysyl-tRNA synthetase</fullName>
        <shortName evidence="1">LysRS</shortName>
    </alternativeName>
</protein>
<comment type="catalytic activity">
    <reaction evidence="1">
        <text>tRNA(Lys) + L-lysine + ATP = L-lysyl-tRNA(Lys) + AMP + diphosphate</text>
        <dbReference type="Rhea" id="RHEA:20792"/>
        <dbReference type="Rhea" id="RHEA-COMP:9696"/>
        <dbReference type="Rhea" id="RHEA-COMP:9697"/>
        <dbReference type="ChEBI" id="CHEBI:30616"/>
        <dbReference type="ChEBI" id="CHEBI:32551"/>
        <dbReference type="ChEBI" id="CHEBI:33019"/>
        <dbReference type="ChEBI" id="CHEBI:78442"/>
        <dbReference type="ChEBI" id="CHEBI:78529"/>
        <dbReference type="ChEBI" id="CHEBI:456215"/>
        <dbReference type="EC" id="6.1.1.6"/>
    </reaction>
</comment>
<comment type="cofactor">
    <cofactor evidence="1">
        <name>Mg(2+)</name>
        <dbReference type="ChEBI" id="CHEBI:18420"/>
    </cofactor>
    <text evidence="1">Binds 3 Mg(2+) ions per subunit.</text>
</comment>
<comment type="subunit">
    <text evidence="1">Homodimer.</text>
</comment>
<comment type="subcellular location">
    <subcellularLocation>
        <location evidence="1">Cytoplasm</location>
    </subcellularLocation>
</comment>
<comment type="similarity">
    <text evidence="1">Belongs to the class-II aminoacyl-tRNA synthetase family.</text>
</comment>